<proteinExistence type="inferred from homology"/>
<gene>
    <name evidence="2" type="primary">N</name>
</gene>
<reference key="1">
    <citation type="journal article" date="1999" name="Lab. Anim. Sci.">
        <title>Reverse transcriptase polymerase chain reaction-based diagnosis and molecular characterization of a new rat coronavirus strain.</title>
        <authorList>
            <person name="Compton S.R."/>
            <person name="Vivas-Gonzalez B.E."/>
            <person name="Macy J.D."/>
        </authorList>
    </citation>
    <scope>NUCLEOTIDE SEQUENCE [GENOMIC RNA]</scope>
</reference>
<feature type="chain" id="PRO_0000106017" description="Nucleoprotein">
    <location>
        <begin position="1"/>
        <end position="454"/>
    </location>
</feature>
<feature type="domain" description="CoV N NTD" evidence="3">
    <location>
        <begin position="64"/>
        <end position="193"/>
    </location>
</feature>
<feature type="domain" description="CoV N CTD" evidence="4">
    <location>
        <begin position="260"/>
        <end position="383"/>
    </location>
</feature>
<feature type="region of interest" description="Disordered" evidence="5">
    <location>
        <begin position="1"/>
        <end position="62"/>
    </location>
</feature>
<feature type="region of interest" description="RNA-binding" evidence="2">
    <location>
        <begin position="56"/>
        <end position="197"/>
    </location>
</feature>
<feature type="region of interest" description="Disordered" evidence="5">
    <location>
        <begin position="186"/>
        <end position="230"/>
    </location>
</feature>
<feature type="region of interest" description="Dimerization" evidence="2">
    <location>
        <begin position="267"/>
        <end position="384"/>
    </location>
</feature>
<feature type="region of interest" description="Disordered" evidence="5">
    <location>
        <begin position="271"/>
        <end position="292"/>
    </location>
</feature>
<feature type="region of interest" description="Disordered" evidence="5">
    <location>
        <begin position="385"/>
        <end position="428"/>
    </location>
</feature>
<feature type="compositionally biased region" description="Low complexity" evidence="5">
    <location>
        <begin position="11"/>
        <end position="21"/>
    </location>
</feature>
<feature type="compositionally biased region" description="Polar residues" evidence="5">
    <location>
        <begin position="49"/>
        <end position="61"/>
    </location>
</feature>
<feature type="compositionally biased region" description="Low complexity" evidence="5">
    <location>
        <begin position="193"/>
        <end position="227"/>
    </location>
</feature>
<feature type="binding site" evidence="1">
    <location>
        <position position="109"/>
    </location>
    <ligand>
        <name>RNA</name>
        <dbReference type="ChEBI" id="CHEBI:33697"/>
    </ligand>
</feature>
<feature type="binding site" evidence="1">
    <location>
        <position position="125"/>
    </location>
    <ligand>
        <name>RNA</name>
        <dbReference type="ChEBI" id="CHEBI:33697"/>
    </ligand>
</feature>
<feature type="binding site" evidence="1">
    <location>
        <position position="167"/>
    </location>
    <ligand>
        <name>RNA</name>
        <dbReference type="ChEBI" id="CHEBI:33697"/>
    </ligand>
</feature>
<feature type="modified residue" description="Phosphoserine; by host" evidence="2">
    <location>
        <position position="170"/>
    </location>
</feature>
<feature type="modified residue" description="Phosphothreonine; by host" evidence="2">
    <location>
        <position position="177"/>
    </location>
</feature>
<feature type="modified residue" description="Phosphoserine; by host" evidence="2">
    <location>
        <position position="194"/>
    </location>
</feature>
<feature type="modified residue" description="Phosphoserine; by host" evidence="2">
    <location>
        <position position="390"/>
    </location>
</feature>
<feature type="modified residue" description="Phosphoserine; by host" evidence="2">
    <location>
        <position position="425"/>
    </location>
</feature>
<feature type="modified residue" description="Phosphothreonine; by host" evidence="2">
    <location>
        <position position="429"/>
    </location>
</feature>
<accession>Q9WCD0</accession>
<organism>
    <name type="scientific">Rat coronavirus (strain NJ)</name>
    <name type="common">RCV-NJ</name>
    <dbReference type="NCBI Taxonomy" id="231433"/>
    <lineage>
        <taxon>Viruses</taxon>
        <taxon>Riboviria</taxon>
        <taxon>Orthornavirae</taxon>
        <taxon>Pisuviricota</taxon>
        <taxon>Pisoniviricetes</taxon>
        <taxon>Nidovirales</taxon>
        <taxon>Cornidovirineae</taxon>
        <taxon>Coronaviridae</taxon>
        <taxon>Orthocoronavirinae</taxon>
        <taxon>Betacoronavirus</taxon>
        <taxon>Embecovirus</taxon>
        <taxon>Murine coronavirus</taxon>
    </lineage>
</organism>
<comment type="function">
    <text evidence="2">Packages the positive strand viral genome RNA into a helical ribonucleocapsid (RNP) and plays a fundamental role during virion assembly through its interactions with the viral genome and membrane protein M. Plays an important role in enhancing the efficiency of subgenomic viral RNA transcription as well as viral replication.</text>
</comment>
<comment type="subunit">
    <text evidence="2">Homooligomer. Both monomeric and oligomeric forms interact with RNA. Interacts with protein M. Interacts with NSP3; this interaction serves to tether the genome to the newly translated replicase-transcriptase complex at a very early stage of infection.</text>
</comment>
<comment type="subcellular location">
    <subcellularLocation>
        <location evidence="2">Virion</location>
    </subcellularLocation>
    <subcellularLocation>
        <location evidence="2">Host endoplasmic reticulum-Golgi intermediate compartment</location>
    </subcellularLocation>
    <subcellularLocation>
        <location evidence="2">Host Golgi apparatus</location>
    </subcellularLocation>
    <text evidence="2">Located inside the virion, complexed with the viral RNA. Probably associates with ER-derived membranes where it participates in viral RNA synthesis and virus budding.</text>
</comment>
<comment type="PTM">
    <text evidence="2">ADP-ribosylated. The ADP-ribosylation is retained in the virion during infection.</text>
</comment>
<comment type="PTM">
    <text evidence="2">Phosphorylated on serine and threonine residues.</text>
</comment>
<comment type="similarity">
    <text evidence="2">Belongs to the betacoronavirus nucleocapsid protein family.</text>
</comment>
<name>NCAP_CVRNJ</name>
<evidence type="ECO:0000250" key="1">
    <source>
        <dbReference type="UniProtKB" id="P0DTC9"/>
    </source>
</evidence>
<evidence type="ECO:0000255" key="2">
    <source>
        <dbReference type="HAMAP-Rule" id="MF_04096"/>
    </source>
</evidence>
<evidence type="ECO:0000255" key="3">
    <source>
        <dbReference type="PROSITE-ProRule" id="PRU01276"/>
    </source>
</evidence>
<evidence type="ECO:0000255" key="4">
    <source>
        <dbReference type="PROSITE-ProRule" id="PRU01277"/>
    </source>
</evidence>
<evidence type="ECO:0000256" key="5">
    <source>
        <dbReference type="SAM" id="MobiDB-lite"/>
    </source>
</evidence>
<keyword id="KW-0013">ADP-ribosylation</keyword>
<keyword id="KW-1040">Host Golgi apparatus</keyword>
<keyword id="KW-0597">Phosphoprotein</keyword>
<keyword id="KW-0687">Ribonucleoprotein</keyword>
<keyword id="KW-0694">RNA-binding</keyword>
<keyword id="KW-0804">Transcription</keyword>
<keyword id="KW-0805">Transcription regulation</keyword>
<keyword id="KW-0543">Viral nucleoprotein</keyword>
<keyword id="KW-0946">Virion</keyword>
<protein>
    <recommendedName>
        <fullName evidence="2">Nucleoprotein</fullName>
    </recommendedName>
    <alternativeName>
        <fullName evidence="2">Nucleocapsid protein</fullName>
        <shortName evidence="2">NC</shortName>
        <shortName evidence="2">Protein N</shortName>
    </alternativeName>
</protein>
<organismHost>
    <name type="scientific">Rattus norvegicus</name>
    <name type="common">Rat</name>
    <dbReference type="NCBI Taxonomy" id="10116"/>
</organismHost>
<dbReference type="EMBL" id="AF088984">
    <property type="protein sequence ID" value="AAD33104.1"/>
    <property type="molecule type" value="Genomic_RNA"/>
</dbReference>
<dbReference type="BMRB" id="Q9WCD0"/>
<dbReference type="SMR" id="Q9WCD0"/>
<dbReference type="GO" id="GO:0044172">
    <property type="term" value="C:host cell endoplasmic reticulum-Golgi intermediate compartment"/>
    <property type="evidence" value="ECO:0007669"/>
    <property type="project" value="UniProtKB-SubCell"/>
</dbReference>
<dbReference type="GO" id="GO:0044177">
    <property type="term" value="C:host cell Golgi apparatus"/>
    <property type="evidence" value="ECO:0007669"/>
    <property type="project" value="UniProtKB-SubCell"/>
</dbReference>
<dbReference type="GO" id="GO:1990904">
    <property type="term" value="C:ribonucleoprotein complex"/>
    <property type="evidence" value="ECO:0007669"/>
    <property type="project" value="UniProtKB-KW"/>
</dbReference>
<dbReference type="GO" id="GO:0019013">
    <property type="term" value="C:viral nucleocapsid"/>
    <property type="evidence" value="ECO:0007669"/>
    <property type="project" value="UniProtKB-UniRule"/>
</dbReference>
<dbReference type="GO" id="GO:0003723">
    <property type="term" value="F:RNA binding"/>
    <property type="evidence" value="ECO:0007669"/>
    <property type="project" value="UniProtKB-UniRule"/>
</dbReference>
<dbReference type="CDD" id="cd21595">
    <property type="entry name" value="CoV_N-CTD"/>
    <property type="match status" value="1"/>
</dbReference>
<dbReference type="CDD" id="cd21554">
    <property type="entry name" value="CoV_N-NTD"/>
    <property type="match status" value="1"/>
</dbReference>
<dbReference type="HAMAP" id="MF_04096">
    <property type="entry name" value="BETA_CORONA_NCAP"/>
    <property type="match status" value="1"/>
</dbReference>
<dbReference type="InterPro" id="IPR044344">
    <property type="entry name" value="N_prot_C_CoV"/>
</dbReference>
<dbReference type="InterPro" id="IPR044345">
    <property type="entry name" value="N_prot_N_CoV"/>
</dbReference>
<dbReference type="InterPro" id="IPR043505">
    <property type="entry name" value="NCAP_bCoV"/>
</dbReference>
<dbReference type="InterPro" id="IPR001218">
    <property type="entry name" value="Nucleocap_CoV"/>
</dbReference>
<dbReference type="InterPro" id="IPR037179">
    <property type="entry name" value="Nucleocapsid_C"/>
</dbReference>
<dbReference type="InterPro" id="IPR037195">
    <property type="entry name" value="Nucleocapsid_N"/>
</dbReference>
<dbReference type="Pfam" id="PF00937">
    <property type="entry name" value="CoV_nucleocap"/>
    <property type="match status" value="1"/>
</dbReference>
<dbReference type="PIRSF" id="PIRSF003888">
    <property type="entry name" value="Corona_nucleocap"/>
    <property type="match status" value="1"/>
</dbReference>
<dbReference type="SUPFAM" id="SSF110304">
    <property type="entry name" value="Coronavirus RNA-binding domain"/>
    <property type="match status" value="1"/>
</dbReference>
<dbReference type="SUPFAM" id="SSF103068">
    <property type="entry name" value="Nucleocapsid protein dimerization domain"/>
    <property type="match status" value="1"/>
</dbReference>
<dbReference type="PROSITE" id="PS51929">
    <property type="entry name" value="COV_N_CTD"/>
    <property type="match status" value="1"/>
</dbReference>
<dbReference type="PROSITE" id="PS51928">
    <property type="entry name" value="COV_N_NTD"/>
    <property type="match status" value="1"/>
</dbReference>
<sequence length="454" mass="49560">MSFVPGQENAGSRSSSGSRSGNGILKKTTWADQTERAGNNGNRGRRNQPKQTATTQPNSGSVVPHYSWFSGITQFQKGKEFQFADGQGVPIANGIPATEQKGYWYRHNRRSFKTPDGQQKQLLPRWYFYYLGTGPHAGAIYGDSIEGVFWVANSQADTNTRADIVERDPSSHEAIPTRFAPGTVLPQGFYVEGSGRSAPASRSGSRSQSRGPSNRARSSSNQRQPASTVKPDMAEEIAALVLAKLGKDAGQPKQVTKQSAKEVRQKILNKPRQKRTPNKQCPVQQCFGKRGPNQNFGGSEMLKLGTSDPQFPILAELAPTPGAFFFGSKLELVKKNSGGADEPTKDVYELQYSGAIRFDSTLPGFETIMKVLNENLNAYQKEAGGVDVVSPKPQRKGRRQAQEKKDEVDNVSVAKPKSSVQRNVSRELTPEDRSLLAQILDDGVVPDGLDDSNA</sequence>